<sequence>MKTGIHPEYVDTTVQCGCGHSFTTRSTKQSGTIVVEVCSQCHPFYTGKQKILDSGGRVARFEKRYGKRNKAAADK</sequence>
<reference key="1">
    <citation type="submission" date="2006-10" db="EMBL/GenBank/DDBJ databases">
        <authorList>
            <person name="Fleischmann R.D."/>
            <person name="Dodson R.J."/>
            <person name="Haft D.H."/>
            <person name="Merkel J.S."/>
            <person name="Nelson W.C."/>
            <person name="Fraser C.M."/>
        </authorList>
    </citation>
    <scope>NUCLEOTIDE SEQUENCE [LARGE SCALE GENOMIC DNA]</scope>
    <source>
        <strain>ATCC 700084 / mc(2)155</strain>
    </source>
</reference>
<reference key="2">
    <citation type="journal article" date="2007" name="Genome Biol.">
        <title>Interrupted coding sequences in Mycobacterium smegmatis: authentic mutations or sequencing errors?</title>
        <authorList>
            <person name="Deshayes C."/>
            <person name="Perrodou E."/>
            <person name="Gallien S."/>
            <person name="Euphrasie D."/>
            <person name="Schaeffer C."/>
            <person name="Van-Dorsselaer A."/>
            <person name="Poch O."/>
            <person name="Lecompte O."/>
            <person name="Reyrat J.-M."/>
        </authorList>
    </citation>
    <scope>NUCLEOTIDE SEQUENCE [LARGE SCALE GENOMIC DNA]</scope>
    <source>
        <strain>ATCC 700084 / mc(2)155</strain>
    </source>
</reference>
<reference key="3">
    <citation type="journal article" date="2009" name="Genome Res.">
        <title>Ortho-proteogenomics: multiple proteomes investigation through orthology and a new MS-based protocol.</title>
        <authorList>
            <person name="Gallien S."/>
            <person name="Perrodou E."/>
            <person name="Carapito C."/>
            <person name="Deshayes C."/>
            <person name="Reyrat J.-M."/>
            <person name="Van Dorsselaer A."/>
            <person name="Poch O."/>
            <person name="Schaeffer C."/>
            <person name="Lecompte O."/>
        </authorList>
    </citation>
    <scope>NUCLEOTIDE SEQUENCE [LARGE SCALE GENOMIC DNA]</scope>
    <source>
        <strain>ATCC 700084 / mc(2)155</strain>
    </source>
</reference>
<protein>
    <recommendedName>
        <fullName evidence="1">Large ribosomal subunit protein bL31</fullName>
    </recommendedName>
    <alternativeName>
        <fullName evidence="2">50S ribosomal protein L31</fullName>
    </alternativeName>
</protein>
<comment type="function">
    <text evidence="1">Binds the 23S rRNA.</text>
</comment>
<comment type="cofactor">
    <cofactor evidence="1">
        <name>Zn(2+)</name>
        <dbReference type="ChEBI" id="CHEBI:29105"/>
    </cofactor>
    <text evidence="1">Binds 1 zinc ion per subunit.</text>
</comment>
<comment type="subunit">
    <text evidence="1">Part of the 50S ribosomal subunit.</text>
</comment>
<comment type="similarity">
    <text evidence="1">Belongs to the bacterial ribosomal protein bL31 family. Type A subfamily.</text>
</comment>
<evidence type="ECO:0000255" key="1">
    <source>
        <dbReference type="HAMAP-Rule" id="MF_00501"/>
    </source>
</evidence>
<evidence type="ECO:0000305" key="2"/>
<evidence type="ECO:0007829" key="3">
    <source>
        <dbReference type="PDB" id="5O60"/>
    </source>
</evidence>
<evidence type="ECO:0007829" key="4">
    <source>
        <dbReference type="PDB" id="5ZET"/>
    </source>
</evidence>
<proteinExistence type="evidence at protein level"/>
<organism>
    <name type="scientific">Mycolicibacterium smegmatis (strain ATCC 700084 / mc(2)155)</name>
    <name type="common">Mycobacterium smegmatis</name>
    <dbReference type="NCBI Taxonomy" id="246196"/>
    <lineage>
        <taxon>Bacteria</taxon>
        <taxon>Bacillati</taxon>
        <taxon>Actinomycetota</taxon>
        <taxon>Actinomycetes</taxon>
        <taxon>Mycobacteriales</taxon>
        <taxon>Mycobacteriaceae</taxon>
        <taxon>Mycolicibacterium</taxon>
    </lineage>
</organism>
<accession>A0R215</accession>
<accession>I7FR73</accession>
<feature type="chain" id="PRO_1000126666" description="Large ribosomal subunit protein bL31">
    <location>
        <begin position="1"/>
        <end position="75"/>
    </location>
</feature>
<feature type="binding site" evidence="1">
    <location>
        <position position="16"/>
    </location>
    <ligand>
        <name>Zn(2+)</name>
        <dbReference type="ChEBI" id="CHEBI:29105"/>
    </ligand>
</feature>
<feature type="binding site" evidence="1">
    <location>
        <position position="18"/>
    </location>
    <ligand>
        <name>Zn(2+)</name>
        <dbReference type="ChEBI" id="CHEBI:29105"/>
    </ligand>
</feature>
<feature type="binding site" evidence="1">
    <location>
        <position position="38"/>
    </location>
    <ligand>
        <name>Zn(2+)</name>
        <dbReference type="ChEBI" id="CHEBI:29105"/>
    </ligand>
</feature>
<feature type="binding site" evidence="1">
    <location>
        <position position="41"/>
    </location>
    <ligand>
        <name>Zn(2+)</name>
        <dbReference type="ChEBI" id="CHEBI:29105"/>
    </ligand>
</feature>
<feature type="turn" evidence="3">
    <location>
        <begin position="3"/>
        <end position="5"/>
    </location>
</feature>
<feature type="strand" evidence="3">
    <location>
        <begin position="10"/>
        <end position="16"/>
    </location>
</feature>
<feature type="strand" evidence="3">
    <location>
        <begin position="21"/>
        <end position="27"/>
    </location>
</feature>
<feature type="strand" evidence="3">
    <location>
        <begin position="32"/>
        <end position="36"/>
    </location>
</feature>
<feature type="turn" evidence="3">
    <location>
        <begin position="39"/>
        <end position="41"/>
    </location>
</feature>
<feature type="helix" evidence="3">
    <location>
        <begin position="43"/>
        <end position="46"/>
    </location>
</feature>
<feature type="helix" evidence="4">
    <location>
        <begin position="57"/>
        <end position="64"/>
    </location>
</feature>
<keyword id="KW-0002">3D-structure</keyword>
<keyword id="KW-0479">Metal-binding</keyword>
<keyword id="KW-1185">Reference proteome</keyword>
<keyword id="KW-0687">Ribonucleoprotein</keyword>
<keyword id="KW-0689">Ribosomal protein</keyword>
<keyword id="KW-0694">RNA-binding</keyword>
<keyword id="KW-0699">rRNA-binding</keyword>
<keyword id="KW-0862">Zinc</keyword>
<name>RL31_MYCS2</name>
<gene>
    <name evidence="1" type="primary">rpmE</name>
    <name type="ordered locus">MSMEG_4951</name>
    <name type="ordered locus">MSMEI_4823</name>
</gene>
<dbReference type="EMBL" id="CP000480">
    <property type="protein sequence ID" value="ABK71247.1"/>
    <property type="molecule type" value="Genomic_DNA"/>
</dbReference>
<dbReference type="EMBL" id="CP001663">
    <property type="protein sequence ID" value="AFP41268.1"/>
    <property type="molecule type" value="Genomic_DNA"/>
</dbReference>
<dbReference type="RefSeq" id="WP_003896340.1">
    <property type="nucleotide sequence ID" value="NZ_SIJM01000019.1"/>
</dbReference>
<dbReference type="RefSeq" id="YP_889203.1">
    <property type="nucleotide sequence ID" value="NC_008596.1"/>
</dbReference>
<dbReference type="PDB" id="5O5J">
    <property type="method" value="EM"/>
    <property type="resolution" value="3.45 A"/>
    <property type="chains" value="g=1-75"/>
</dbReference>
<dbReference type="PDB" id="5O60">
    <property type="method" value="EM"/>
    <property type="resolution" value="3.20 A"/>
    <property type="chains" value="g=1-75"/>
</dbReference>
<dbReference type="PDB" id="5O61">
    <property type="method" value="EM"/>
    <property type="resolution" value="3.31 A"/>
    <property type="chains" value="g=1-75"/>
</dbReference>
<dbReference type="PDB" id="5ZEB">
    <property type="method" value="EM"/>
    <property type="resolution" value="3.40 A"/>
    <property type="chains" value="2=1-75"/>
</dbReference>
<dbReference type="PDB" id="5ZEP">
    <property type="method" value="EM"/>
    <property type="resolution" value="3.40 A"/>
    <property type="chains" value="y=1-75"/>
</dbReference>
<dbReference type="PDB" id="5ZET">
    <property type="method" value="EM"/>
    <property type="resolution" value="3.20 A"/>
    <property type="chains" value="2=1-75"/>
</dbReference>
<dbReference type="PDB" id="7S0S">
    <property type="method" value="EM"/>
    <property type="resolution" value="3.05 A"/>
    <property type="chains" value="h=1-48"/>
</dbReference>
<dbReference type="PDB" id="7XAM">
    <property type="method" value="EM"/>
    <property type="resolution" value="2.80 A"/>
    <property type="chains" value="g=1-75"/>
</dbReference>
<dbReference type="PDB" id="7Y41">
    <property type="method" value="EM"/>
    <property type="resolution" value="4.10 A"/>
    <property type="chains" value="g=1-75"/>
</dbReference>
<dbReference type="PDB" id="8KAB">
    <property type="method" value="EM"/>
    <property type="resolution" value="3.30 A"/>
    <property type="chains" value="g=1-75"/>
</dbReference>
<dbReference type="PDB" id="8V9J">
    <property type="method" value="EM"/>
    <property type="resolution" value="3.10 A"/>
    <property type="chains" value="3=1-75"/>
</dbReference>
<dbReference type="PDB" id="8V9K">
    <property type="method" value="EM"/>
    <property type="resolution" value="3.10 A"/>
    <property type="chains" value="3=1-75"/>
</dbReference>
<dbReference type="PDB" id="8V9L">
    <property type="method" value="EM"/>
    <property type="resolution" value="3.00 A"/>
    <property type="chains" value="3=1-75"/>
</dbReference>
<dbReference type="PDB" id="8VIO">
    <property type="method" value="EM"/>
    <property type="resolution" value="3.26 A"/>
    <property type="chains" value="g=1-75"/>
</dbReference>
<dbReference type="PDB" id="8VK0">
    <property type="method" value="EM"/>
    <property type="resolution" value="3.14 A"/>
    <property type="chains" value="g=1-75"/>
</dbReference>
<dbReference type="PDB" id="8VK7">
    <property type="method" value="EM"/>
    <property type="resolution" value="3.09 A"/>
    <property type="chains" value="g=1-75"/>
</dbReference>
<dbReference type="PDB" id="8VKW">
    <property type="method" value="EM"/>
    <property type="resolution" value="3.44 A"/>
    <property type="chains" value="g=1-75"/>
</dbReference>
<dbReference type="PDB" id="8VR4">
    <property type="method" value="EM"/>
    <property type="resolution" value="2.80 A"/>
    <property type="chains" value="g=1-75"/>
</dbReference>
<dbReference type="PDB" id="8VRL">
    <property type="method" value="EM"/>
    <property type="resolution" value="3.33 A"/>
    <property type="chains" value="g=1-75"/>
</dbReference>
<dbReference type="PDB" id="8WHX">
    <property type="method" value="EM"/>
    <property type="resolution" value="2.80 A"/>
    <property type="chains" value="4=1-75"/>
</dbReference>
<dbReference type="PDB" id="8WHY">
    <property type="method" value="EM"/>
    <property type="resolution" value="2.70 A"/>
    <property type="chains" value="4=1-75"/>
</dbReference>
<dbReference type="PDB" id="8WI7">
    <property type="method" value="EM"/>
    <property type="resolution" value="3.50 A"/>
    <property type="chains" value="4=1-75"/>
</dbReference>
<dbReference type="PDB" id="8WI8">
    <property type="method" value="EM"/>
    <property type="resolution" value="2.70 A"/>
    <property type="chains" value="4=1-75"/>
</dbReference>
<dbReference type="PDB" id="8WI9">
    <property type="method" value="EM"/>
    <property type="resolution" value="3.50 A"/>
    <property type="chains" value="x=56-66"/>
</dbReference>
<dbReference type="PDB" id="8WIB">
    <property type="method" value="EM"/>
    <property type="resolution" value="3.50 A"/>
    <property type="chains" value="4=1-75"/>
</dbReference>
<dbReference type="PDB" id="8WIC">
    <property type="method" value="EM"/>
    <property type="resolution" value="3.50 A"/>
    <property type="chains" value="4=1-75"/>
</dbReference>
<dbReference type="PDB" id="8WID">
    <property type="method" value="EM"/>
    <property type="resolution" value="3.50 A"/>
    <property type="chains" value="x=1-75"/>
</dbReference>
<dbReference type="PDB" id="8WIF">
    <property type="method" value="EM"/>
    <property type="resolution" value="2.90 A"/>
    <property type="chains" value="x=1-75"/>
</dbReference>
<dbReference type="PDB" id="8XZ3">
    <property type="method" value="EM"/>
    <property type="resolution" value="3.60 A"/>
    <property type="chains" value="g=1-48"/>
</dbReference>
<dbReference type="PDBsum" id="5O5J"/>
<dbReference type="PDBsum" id="5O60"/>
<dbReference type="PDBsum" id="5O61"/>
<dbReference type="PDBsum" id="5ZEB"/>
<dbReference type="PDBsum" id="5ZEP"/>
<dbReference type="PDBsum" id="5ZET"/>
<dbReference type="PDBsum" id="7S0S"/>
<dbReference type="PDBsum" id="7XAM"/>
<dbReference type="PDBsum" id="7Y41"/>
<dbReference type="PDBsum" id="8KAB"/>
<dbReference type="PDBsum" id="8V9J"/>
<dbReference type="PDBsum" id="8V9K"/>
<dbReference type="PDBsum" id="8V9L"/>
<dbReference type="PDBsum" id="8VIO"/>
<dbReference type="PDBsum" id="8VK0"/>
<dbReference type="PDBsum" id="8VK7"/>
<dbReference type="PDBsum" id="8VKW"/>
<dbReference type="PDBsum" id="8VR4"/>
<dbReference type="PDBsum" id="8VRL"/>
<dbReference type="PDBsum" id="8WHX"/>
<dbReference type="PDBsum" id="8WHY"/>
<dbReference type="PDBsum" id="8WI7"/>
<dbReference type="PDBsum" id="8WI8"/>
<dbReference type="PDBsum" id="8WI9"/>
<dbReference type="PDBsum" id="8WIB"/>
<dbReference type="PDBsum" id="8WIC"/>
<dbReference type="PDBsum" id="8WID"/>
<dbReference type="PDBsum" id="8WIF"/>
<dbReference type="PDBsum" id="8XZ3"/>
<dbReference type="EMDB" id="EMD-33096"/>
<dbReference type="EMDB" id="EMD-33599"/>
<dbReference type="EMDB" id="EMD-37007"/>
<dbReference type="EMDB" id="EMD-3748"/>
<dbReference type="EMDB" id="EMD-3750"/>
<dbReference type="EMDB" id="EMD-3751"/>
<dbReference type="EMDB" id="EMD-37551"/>
<dbReference type="EMDB" id="EMD-37552"/>
<dbReference type="EMDB" id="EMD-37559"/>
<dbReference type="EMDB" id="EMD-37560"/>
<dbReference type="EMDB" id="EMD-37561"/>
<dbReference type="EMDB" id="EMD-37562"/>
<dbReference type="EMDB" id="EMD-37563"/>
<dbReference type="EMDB" id="EMD-37564"/>
<dbReference type="EMDB" id="EMD-37565"/>
<dbReference type="EMDB" id="EMD-38788"/>
<dbReference type="EMDB" id="EMD-43074"/>
<dbReference type="EMDB" id="EMD-43075"/>
<dbReference type="EMDB" id="EMD-43076"/>
<dbReference type="EMDB" id="EMD-43267"/>
<dbReference type="EMDB" id="EMD-43294"/>
<dbReference type="EMDB" id="EMD-43305"/>
<dbReference type="EMDB" id="EMD-43333"/>
<dbReference type="EMDB" id="EMD-43476"/>
<dbReference type="EMDB" id="EMD-43484"/>
<dbReference type="EMDB" id="EMD-6920"/>
<dbReference type="EMDB" id="EMD-6921"/>
<dbReference type="EMDB" id="EMD-6922"/>
<dbReference type="SMR" id="A0R215"/>
<dbReference type="IntAct" id="A0R215">
    <property type="interactions" value="2"/>
</dbReference>
<dbReference type="STRING" id="246196.MSMEG_4951"/>
<dbReference type="PaxDb" id="246196-MSMEI_4823"/>
<dbReference type="GeneID" id="93459618"/>
<dbReference type="KEGG" id="msb:LJ00_24480"/>
<dbReference type="KEGG" id="msg:MSMEI_4823"/>
<dbReference type="KEGG" id="msm:MSMEG_4951"/>
<dbReference type="PATRIC" id="fig|246196.19.peg.4830"/>
<dbReference type="eggNOG" id="COG0254">
    <property type="taxonomic scope" value="Bacteria"/>
</dbReference>
<dbReference type="OrthoDB" id="9803251at2"/>
<dbReference type="Proteomes" id="UP000000757">
    <property type="component" value="Chromosome"/>
</dbReference>
<dbReference type="Proteomes" id="UP000006158">
    <property type="component" value="Chromosome"/>
</dbReference>
<dbReference type="GO" id="GO:1990904">
    <property type="term" value="C:ribonucleoprotein complex"/>
    <property type="evidence" value="ECO:0007669"/>
    <property type="project" value="UniProtKB-KW"/>
</dbReference>
<dbReference type="GO" id="GO:0005840">
    <property type="term" value="C:ribosome"/>
    <property type="evidence" value="ECO:0007669"/>
    <property type="project" value="UniProtKB-KW"/>
</dbReference>
<dbReference type="GO" id="GO:0046872">
    <property type="term" value="F:metal ion binding"/>
    <property type="evidence" value="ECO:0007669"/>
    <property type="project" value="UniProtKB-KW"/>
</dbReference>
<dbReference type="GO" id="GO:0019843">
    <property type="term" value="F:rRNA binding"/>
    <property type="evidence" value="ECO:0007669"/>
    <property type="project" value="UniProtKB-KW"/>
</dbReference>
<dbReference type="GO" id="GO:0003735">
    <property type="term" value="F:structural constituent of ribosome"/>
    <property type="evidence" value="ECO:0007669"/>
    <property type="project" value="InterPro"/>
</dbReference>
<dbReference type="GO" id="GO:0006412">
    <property type="term" value="P:translation"/>
    <property type="evidence" value="ECO:0007669"/>
    <property type="project" value="UniProtKB-UniRule"/>
</dbReference>
<dbReference type="Gene3D" id="4.10.830.30">
    <property type="entry name" value="Ribosomal protein L31"/>
    <property type="match status" value="1"/>
</dbReference>
<dbReference type="HAMAP" id="MF_00501">
    <property type="entry name" value="Ribosomal_bL31_1"/>
    <property type="match status" value="1"/>
</dbReference>
<dbReference type="InterPro" id="IPR034704">
    <property type="entry name" value="Ribosomal_bL28/bL31-like_sf"/>
</dbReference>
<dbReference type="InterPro" id="IPR002150">
    <property type="entry name" value="Ribosomal_bL31"/>
</dbReference>
<dbReference type="InterPro" id="IPR027491">
    <property type="entry name" value="Ribosomal_bL31_A"/>
</dbReference>
<dbReference type="InterPro" id="IPR042105">
    <property type="entry name" value="Ribosomal_bL31_sf"/>
</dbReference>
<dbReference type="NCBIfam" id="TIGR00105">
    <property type="entry name" value="L31"/>
    <property type="match status" value="1"/>
</dbReference>
<dbReference type="NCBIfam" id="NF000612">
    <property type="entry name" value="PRK00019.1"/>
    <property type="match status" value="1"/>
</dbReference>
<dbReference type="NCBIfam" id="NF001809">
    <property type="entry name" value="PRK00528.1"/>
    <property type="match status" value="1"/>
</dbReference>
<dbReference type="PANTHER" id="PTHR33280">
    <property type="entry name" value="50S RIBOSOMAL PROTEIN L31, CHLOROPLASTIC"/>
    <property type="match status" value="1"/>
</dbReference>
<dbReference type="PANTHER" id="PTHR33280:SF1">
    <property type="entry name" value="LARGE RIBOSOMAL SUBUNIT PROTEIN BL31C"/>
    <property type="match status" value="1"/>
</dbReference>
<dbReference type="Pfam" id="PF01197">
    <property type="entry name" value="Ribosomal_L31"/>
    <property type="match status" value="1"/>
</dbReference>
<dbReference type="PRINTS" id="PR01249">
    <property type="entry name" value="RIBOSOMALL31"/>
</dbReference>
<dbReference type="SUPFAM" id="SSF143800">
    <property type="entry name" value="L28p-like"/>
    <property type="match status" value="1"/>
</dbReference>
<dbReference type="PROSITE" id="PS01143">
    <property type="entry name" value="RIBOSOMAL_L31"/>
    <property type="match status" value="1"/>
</dbReference>